<name>MTAP_CAEBR</name>
<gene>
    <name type="ORF">CBG12968</name>
</gene>
<keyword id="KW-0963">Cytoplasm</keyword>
<keyword id="KW-0328">Glycosyltransferase</keyword>
<keyword id="KW-0539">Nucleus</keyword>
<keyword id="KW-0660">Purine salvage</keyword>
<keyword id="KW-1185">Reference proteome</keyword>
<keyword id="KW-0808">Transferase</keyword>
<sequence>MVKVGIIGGSGLEDPNILLNPTAISIDTPYGQPSDHLIQGTINGVECVLLARHGRKHDIMPGNVNYRANLWALYSLGVDVIIASTACGSLKEEVAPGHLLFPDSVFDRTNSRKATFFDGTFSGAPGVSHIQAHPTYNEKLRQVLISTAEKCKLVHHRTGFGVCIEGPRFSTKAESMVFKSWGASLVNMTMMPECILAKELGIPYATTALVTDYDCWKDEDQVTAASVMKVFAANVEKAKTLFIEAVAEIGKIDWSAEILQTKTAARQSIMISPDVEVEFLKVPKT</sequence>
<accession>A8XGS6</accession>
<proteinExistence type="inferred from homology"/>
<reference key="1">
    <citation type="journal article" date="2003" name="PLoS Biol.">
        <title>The genome sequence of Caenorhabditis briggsae: a platform for comparative genomics.</title>
        <authorList>
            <person name="Stein L.D."/>
            <person name="Bao Z."/>
            <person name="Blasiar D."/>
            <person name="Blumenthal T."/>
            <person name="Brent M.R."/>
            <person name="Chen N."/>
            <person name="Chinwalla A."/>
            <person name="Clarke L."/>
            <person name="Clee C."/>
            <person name="Coghlan A."/>
            <person name="Coulson A."/>
            <person name="D'Eustachio P."/>
            <person name="Fitch D.H.A."/>
            <person name="Fulton L.A."/>
            <person name="Fulton R.E."/>
            <person name="Griffiths-Jones S."/>
            <person name="Harris T.W."/>
            <person name="Hillier L.W."/>
            <person name="Kamath R."/>
            <person name="Kuwabara P.E."/>
            <person name="Mardis E.R."/>
            <person name="Marra M.A."/>
            <person name="Miner T.L."/>
            <person name="Minx P."/>
            <person name="Mullikin J.C."/>
            <person name="Plumb R.W."/>
            <person name="Rogers J."/>
            <person name="Schein J.E."/>
            <person name="Sohrmann M."/>
            <person name="Spieth J."/>
            <person name="Stajich J.E."/>
            <person name="Wei C."/>
            <person name="Willey D."/>
            <person name="Wilson R.K."/>
            <person name="Durbin R.M."/>
            <person name="Waterston R.H."/>
        </authorList>
    </citation>
    <scope>NUCLEOTIDE SEQUENCE [LARGE SCALE GENOMIC DNA]</scope>
    <source>
        <strain>AF16</strain>
    </source>
</reference>
<organism>
    <name type="scientific">Caenorhabditis briggsae</name>
    <dbReference type="NCBI Taxonomy" id="6238"/>
    <lineage>
        <taxon>Eukaryota</taxon>
        <taxon>Metazoa</taxon>
        <taxon>Ecdysozoa</taxon>
        <taxon>Nematoda</taxon>
        <taxon>Chromadorea</taxon>
        <taxon>Rhabditida</taxon>
        <taxon>Rhabditina</taxon>
        <taxon>Rhabditomorpha</taxon>
        <taxon>Rhabditoidea</taxon>
        <taxon>Rhabditidae</taxon>
        <taxon>Peloderinae</taxon>
        <taxon>Caenorhabditis</taxon>
    </lineage>
</organism>
<feature type="chain" id="PRO_0000415122" description="S-methyl-5'-thioadenosine phosphorylase">
    <location>
        <begin position="1"/>
        <end position="285"/>
    </location>
</feature>
<feature type="binding site" evidence="1">
    <location>
        <position position="10"/>
    </location>
    <ligand>
        <name>phosphate</name>
        <dbReference type="ChEBI" id="CHEBI:43474"/>
    </ligand>
</feature>
<feature type="binding site" evidence="1">
    <location>
        <begin position="52"/>
        <end position="53"/>
    </location>
    <ligand>
        <name>phosphate</name>
        <dbReference type="ChEBI" id="CHEBI:43474"/>
    </ligand>
</feature>
<feature type="binding site" evidence="1">
    <location>
        <begin position="85"/>
        <end position="86"/>
    </location>
    <ligand>
        <name>phosphate</name>
        <dbReference type="ChEBI" id="CHEBI:43474"/>
    </ligand>
</feature>
<feature type="binding site" evidence="1">
    <location>
        <position position="188"/>
    </location>
    <ligand>
        <name>substrate</name>
    </ligand>
</feature>
<feature type="binding site" evidence="1">
    <location>
        <position position="189"/>
    </location>
    <ligand>
        <name>phosphate</name>
        <dbReference type="ChEBI" id="CHEBI:43474"/>
    </ligand>
</feature>
<feature type="binding site" evidence="1">
    <location>
        <begin position="212"/>
        <end position="214"/>
    </location>
    <ligand>
        <name>substrate</name>
    </ligand>
</feature>
<feature type="site" description="Important for substrate specificity" evidence="1">
    <location>
        <position position="170"/>
    </location>
</feature>
<feature type="site" description="Important for substrate specificity" evidence="1">
    <location>
        <position position="224"/>
    </location>
</feature>
<evidence type="ECO:0000255" key="1">
    <source>
        <dbReference type="HAMAP-Rule" id="MF_03155"/>
    </source>
</evidence>
<comment type="function">
    <text evidence="1">Catalyzes the reversible phosphorylation of S-methyl-5'-thioadenosine (MTA) to adenine and 5-methylthioribose-1-phosphate. Involved in the breakdown of MTA, a major by-product of polyamine biosynthesis. Responsible for the first step in the methionine salvage pathway after MTA has been generated from S-adenosylmethionine. Has broad substrate specificity with 6-aminopurine nucleosides as preferred substrates.</text>
</comment>
<comment type="catalytic activity">
    <reaction evidence="1">
        <text>S-methyl-5'-thioadenosine + phosphate = 5-(methylsulfanyl)-alpha-D-ribose 1-phosphate + adenine</text>
        <dbReference type="Rhea" id="RHEA:11852"/>
        <dbReference type="ChEBI" id="CHEBI:16708"/>
        <dbReference type="ChEBI" id="CHEBI:17509"/>
        <dbReference type="ChEBI" id="CHEBI:43474"/>
        <dbReference type="ChEBI" id="CHEBI:58533"/>
        <dbReference type="EC" id="2.4.2.28"/>
    </reaction>
</comment>
<comment type="pathway">
    <text evidence="1">Amino-acid biosynthesis; L-methionine biosynthesis via salvage pathway; S-methyl-5-thio-alpha-D-ribose 1-phosphate from S-methyl-5'-thioadenosine (phosphorylase route): step 1/1.</text>
</comment>
<comment type="subunit">
    <text evidence="1">Homotrimer.</text>
</comment>
<comment type="subcellular location">
    <subcellularLocation>
        <location evidence="1">Cytoplasm</location>
    </subcellularLocation>
    <subcellularLocation>
        <location evidence="1">Nucleus</location>
    </subcellularLocation>
</comment>
<comment type="similarity">
    <text evidence="1">Belongs to the PNP/MTAP phosphorylase family. MTAP subfamily.</text>
</comment>
<protein>
    <recommendedName>
        <fullName evidence="1">S-methyl-5'-thioadenosine phosphorylase</fullName>
        <ecNumber evidence="1">2.4.2.28</ecNumber>
    </recommendedName>
    <alternativeName>
        <fullName evidence="1">5'-methylthioadenosine phosphorylase</fullName>
        <shortName evidence="1">MTA phosphorylase</shortName>
        <shortName evidence="1">MTAP</shortName>
        <shortName evidence="1">MTAPase</shortName>
    </alternativeName>
</protein>
<dbReference type="EC" id="2.4.2.28" evidence="1"/>
<dbReference type="EMBL" id="HE600938">
    <property type="protein sequence ID" value="CAP31850.1"/>
    <property type="molecule type" value="Genomic_DNA"/>
</dbReference>
<dbReference type="RefSeq" id="XP_002630529.1">
    <property type="nucleotide sequence ID" value="XM_002630483.1"/>
</dbReference>
<dbReference type="SMR" id="A8XGS6"/>
<dbReference type="FunCoup" id="A8XGS6">
    <property type="interactions" value="1679"/>
</dbReference>
<dbReference type="STRING" id="6238.A8XGS6"/>
<dbReference type="EnsemblMetazoa" id="CBG12968.1">
    <property type="protein sequence ID" value="CBG12968.1"/>
    <property type="gene ID" value="WBGene00033820"/>
</dbReference>
<dbReference type="EnsemblMetazoa" id="CBG12968.2">
    <property type="protein sequence ID" value="CBG12968.2"/>
    <property type="gene ID" value="WBGene00033820"/>
</dbReference>
<dbReference type="GeneID" id="8572045"/>
<dbReference type="KEGG" id="cbr:CBG_12968"/>
<dbReference type="CTD" id="8572045"/>
<dbReference type="WormBase" id="CBG12968">
    <property type="protein sequence ID" value="CBP22764"/>
    <property type="gene ID" value="WBGene00033820"/>
</dbReference>
<dbReference type="eggNOG" id="KOG3985">
    <property type="taxonomic scope" value="Eukaryota"/>
</dbReference>
<dbReference type="HOGENOM" id="CLU_054456_0_0_1"/>
<dbReference type="InParanoid" id="A8XGS6"/>
<dbReference type="OMA" id="ADPFCPE"/>
<dbReference type="UniPathway" id="UPA00904">
    <property type="reaction ID" value="UER00873"/>
</dbReference>
<dbReference type="Proteomes" id="UP000008549">
    <property type="component" value="Unassembled WGS sequence"/>
</dbReference>
<dbReference type="GO" id="GO:0005829">
    <property type="term" value="C:cytosol"/>
    <property type="evidence" value="ECO:0000318"/>
    <property type="project" value="GO_Central"/>
</dbReference>
<dbReference type="GO" id="GO:0005634">
    <property type="term" value="C:nucleus"/>
    <property type="evidence" value="ECO:0007669"/>
    <property type="project" value="UniProtKB-SubCell"/>
</dbReference>
<dbReference type="GO" id="GO:0017061">
    <property type="term" value="F:S-methyl-5-thioadenosine phosphorylase activity"/>
    <property type="evidence" value="ECO:0000318"/>
    <property type="project" value="GO_Central"/>
</dbReference>
<dbReference type="GO" id="GO:0019509">
    <property type="term" value="P:L-methionine salvage from methylthioadenosine"/>
    <property type="evidence" value="ECO:0000318"/>
    <property type="project" value="GO_Central"/>
</dbReference>
<dbReference type="GO" id="GO:0006166">
    <property type="term" value="P:purine ribonucleoside salvage"/>
    <property type="evidence" value="ECO:0007669"/>
    <property type="project" value="UniProtKB-KW"/>
</dbReference>
<dbReference type="CDD" id="cd09010">
    <property type="entry name" value="MTAP_SsMTAPII_like_MTIP"/>
    <property type="match status" value="1"/>
</dbReference>
<dbReference type="FunFam" id="3.40.50.1580:FF:000020">
    <property type="entry name" value="S-methyl-5'-thioadenosine phosphorylase"/>
    <property type="match status" value="1"/>
</dbReference>
<dbReference type="Gene3D" id="3.40.50.1580">
    <property type="entry name" value="Nucleoside phosphorylase domain"/>
    <property type="match status" value="1"/>
</dbReference>
<dbReference type="HAMAP" id="MF_01963">
    <property type="entry name" value="MTAP"/>
    <property type="match status" value="1"/>
</dbReference>
<dbReference type="InterPro" id="IPR010044">
    <property type="entry name" value="MTAP"/>
</dbReference>
<dbReference type="InterPro" id="IPR000845">
    <property type="entry name" value="Nucleoside_phosphorylase_d"/>
</dbReference>
<dbReference type="InterPro" id="IPR035994">
    <property type="entry name" value="Nucleoside_phosphorylase_sf"/>
</dbReference>
<dbReference type="InterPro" id="IPR018099">
    <property type="entry name" value="Purine_phosphorylase-2_CS"/>
</dbReference>
<dbReference type="NCBIfam" id="TIGR01694">
    <property type="entry name" value="MTAP"/>
    <property type="match status" value="1"/>
</dbReference>
<dbReference type="PANTHER" id="PTHR42679">
    <property type="entry name" value="S-METHYL-5'-THIOADENOSINE PHOSPHORYLASE"/>
    <property type="match status" value="1"/>
</dbReference>
<dbReference type="PANTHER" id="PTHR42679:SF2">
    <property type="entry name" value="S-METHYL-5'-THIOADENOSINE PHOSPHORYLASE"/>
    <property type="match status" value="1"/>
</dbReference>
<dbReference type="Pfam" id="PF01048">
    <property type="entry name" value="PNP_UDP_1"/>
    <property type="match status" value="1"/>
</dbReference>
<dbReference type="SUPFAM" id="SSF53167">
    <property type="entry name" value="Purine and uridine phosphorylases"/>
    <property type="match status" value="1"/>
</dbReference>
<dbReference type="PROSITE" id="PS01240">
    <property type="entry name" value="PNP_MTAP_2"/>
    <property type="match status" value="1"/>
</dbReference>